<comment type="function">
    <text evidence="1">Catalyzes the condensation of ATP and 5-phosphoribose 1-diphosphate to form N'-(5'-phosphoribosyl)-ATP (PR-ATP). Has a crucial role in the pathway because the rate of histidine biosynthesis seems to be controlled primarily by regulation of HisG enzymatic activity.</text>
</comment>
<comment type="catalytic activity">
    <reaction evidence="1">
        <text>1-(5-phospho-beta-D-ribosyl)-ATP + diphosphate = 5-phospho-alpha-D-ribose 1-diphosphate + ATP</text>
        <dbReference type="Rhea" id="RHEA:18473"/>
        <dbReference type="ChEBI" id="CHEBI:30616"/>
        <dbReference type="ChEBI" id="CHEBI:33019"/>
        <dbReference type="ChEBI" id="CHEBI:58017"/>
        <dbReference type="ChEBI" id="CHEBI:73183"/>
        <dbReference type="EC" id="2.4.2.17"/>
    </reaction>
</comment>
<comment type="cofactor">
    <cofactor evidence="1">
        <name>Mg(2+)</name>
        <dbReference type="ChEBI" id="CHEBI:18420"/>
    </cofactor>
</comment>
<comment type="activity regulation">
    <text evidence="1">Feedback inhibited by histidine.</text>
</comment>
<comment type="pathway">
    <text evidence="1">Amino-acid biosynthesis; L-histidine biosynthesis; L-histidine from 5-phospho-alpha-D-ribose 1-diphosphate: step 1/9.</text>
</comment>
<comment type="subunit">
    <text evidence="1">Equilibrium between an active dimeric form, an inactive hexameric form and higher aggregates. Interconversion between the various forms is largely reversible and is influenced by the natural substrates and inhibitors of the enzyme.</text>
</comment>
<comment type="subcellular location">
    <subcellularLocation>
        <location evidence="1">Cytoplasm</location>
    </subcellularLocation>
</comment>
<comment type="similarity">
    <text evidence="1">Belongs to the ATP phosphoribosyltransferase family. Long subfamily.</text>
</comment>
<sequence>MLDNTRLRIAIQKSGRLSDDSRELLARCGIKINLHTQRLIAMAENMPIDILRVRDDDIPGLVMDGVVDLGIIGENVLEEELLNRRAQGEDPRYFTLRRLDFGGCRLSLATPVDEAWDGPAALDGKRIATSYPHLLKRYLDQKGVSFKSCLLNGSVEVAPRAGLADAICDLVSTGATLEANGLREVEVIYRSKACLIQRDGEMAQSKQELIDKLLTRIQGVIQARESKYIMMHAPSERLEEVIALLPGAERPTILPLAGEQQRVAMHMVSSETLFWETMEKLKALGASSILVLPIEKMME</sequence>
<name>HIS1_SALA4</name>
<organism>
    <name type="scientific">Salmonella agona (strain SL483)</name>
    <dbReference type="NCBI Taxonomy" id="454166"/>
    <lineage>
        <taxon>Bacteria</taxon>
        <taxon>Pseudomonadati</taxon>
        <taxon>Pseudomonadota</taxon>
        <taxon>Gammaproteobacteria</taxon>
        <taxon>Enterobacterales</taxon>
        <taxon>Enterobacteriaceae</taxon>
        <taxon>Salmonella</taxon>
    </lineage>
</organism>
<reference key="1">
    <citation type="journal article" date="2011" name="J. Bacteriol.">
        <title>Comparative genomics of 28 Salmonella enterica isolates: evidence for CRISPR-mediated adaptive sublineage evolution.</title>
        <authorList>
            <person name="Fricke W.F."/>
            <person name="Mammel M.K."/>
            <person name="McDermott P.F."/>
            <person name="Tartera C."/>
            <person name="White D.G."/>
            <person name="Leclerc J.E."/>
            <person name="Ravel J."/>
            <person name="Cebula T.A."/>
        </authorList>
    </citation>
    <scope>NUCLEOTIDE SEQUENCE [LARGE SCALE GENOMIC DNA]</scope>
    <source>
        <strain>SL483</strain>
    </source>
</reference>
<protein>
    <recommendedName>
        <fullName evidence="1">ATP phosphoribosyltransferase</fullName>
        <shortName evidence="1">ATP-PRT</shortName>
        <shortName evidence="1">ATP-PRTase</shortName>
        <ecNumber evidence="1">2.4.2.17</ecNumber>
    </recommendedName>
</protein>
<evidence type="ECO:0000255" key="1">
    <source>
        <dbReference type="HAMAP-Rule" id="MF_00079"/>
    </source>
</evidence>
<gene>
    <name evidence="1" type="primary">hisG</name>
    <name type="ordered locus">SeAg_B2196</name>
</gene>
<proteinExistence type="inferred from homology"/>
<accession>B5EX38</accession>
<feature type="chain" id="PRO_1000092744" description="ATP phosphoribosyltransferase">
    <location>
        <begin position="1"/>
        <end position="299"/>
    </location>
</feature>
<dbReference type="EC" id="2.4.2.17" evidence="1"/>
<dbReference type="EMBL" id="CP001138">
    <property type="protein sequence ID" value="ACH49895.1"/>
    <property type="molecule type" value="Genomic_DNA"/>
</dbReference>
<dbReference type="RefSeq" id="WP_000886599.1">
    <property type="nucleotide sequence ID" value="NC_011149.1"/>
</dbReference>
<dbReference type="SMR" id="B5EX38"/>
<dbReference type="KEGG" id="sea:SeAg_B2196"/>
<dbReference type="HOGENOM" id="CLU_038115_1_0_6"/>
<dbReference type="UniPathway" id="UPA00031">
    <property type="reaction ID" value="UER00006"/>
</dbReference>
<dbReference type="Proteomes" id="UP000008819">
    <property type="component" value="Chromosome"/>
</dbReference>
<dbReference type="GO" id="GO:0005737">
    <property type="term" value="C:cytoplasm"/>
    <property type="evidence" value="ECO:0007669"/>
    <property type="project" value="UniProtKB-SubCell"/>
</dbReference>
<dbReference type="GO" id="GO:0005524">
    <property type="term" value="F:ATP binding"/>
    <property type="evidence" value="ECO:0007669"/>
    <property type="project" value="UniProtKB-KW"/>
</dbReference>
<dbReference type="GO" id="GO:0003879">
    <property type="term" value="F:ATP phosphoribosyltransferase activity"/>
    <property type="evidence" value="ECO:0007669"/>
    <property type="project" value="UniProtKB-UniRule"/>
</dbReference>
<dbReference type="GO" id="GO:0000287">
    <property type="term" value="F:magnesium ion binding"/>
    <property type="evidence" value="ECO:0007669"/>
    <property type="project" value="UniProtKB-UniRule"/>
</dbReference>
<dbReference type="GO" id="GO:0000105">
    <property type="term" value="P:L-histidine biosynthetic process"/>
    <property type="evidence" value="ECO:0007669"/>
    <property type="project" value="UniProtKB-UniRule"/>
</dbReference>
<dbReference type="CDD" id="cd13592">
    <property type="entry name" value="PBP2_HisGL2"/>
    <property type="match status" value="1"/>
</dbReference>
<dbReference type="FunFam" id="3.30.70.120:FF:000002">
    <property type="entry name" value="ATP phosphoribosyltransferase"/>
    <property type="match status" value="1"/>
</dbReference>
<dbReference type="FunFam" id="3.40.190.10:FF:000008">
    <property type="entry name" value="ATP phosphoribosyltransferase"/>
    <property type="match status" value="1"/>
</dbReference>
<dbReference type="Gene3D" id="3.30.70.120">
    <property type="match status" value="1"/>
</dbReference>
<dbReference type="Gene3D" id="3.40.190.10">
    <property type="entry name" value="Periplasmic binding protein-like II"/>
    <property type="match status" value="2"/>
</dbReference>
<dbReference type="HAMAP" id="MF_00079">
    <property type="entry name" value="HisG_Long"/>
    <property type="match status" value="1"/>
</dbReference>
<dbReference type="InterPro" id="IPR020621">
    <property type="entry name" value="ATP-PRT_HisG_long"/>
</dbReference>
<dbReference type="InterPro" id="IPR013820">
    <property type="entry name" value="ATP_PRibTrfase_cat"/>
</dbReference>
<dbReference type="InterPro" id="IPR018198">
    <property type="entry name" value="ATP_PRibTrfase_CS"/>
</dbReference>
<dbReference type="InterPro" id="IPR001348">
    <property type="entry name" value="ATP_PRibTrfase_HisG"/>
</dbReference>
<dbReference type="InterPro" id="IPR013115">
    <property type="entry name" value="HisG_C"/>
</dbReference>
<dbReference type="InterPro" id="IPR011322">
    <property type="entry name" value="N-reg_PII-like_a/b"/>
</dbReference>
<dbReference type="InterPro" id="IPR015867">
    <property type="entry name" value="N-reg_PII/ATP_PRibTrfase_C"/>
</dbReference>
<dbReference type="NCBIfam" id="TIGR00070">
    <property type="entry name" value="hisG"/>
    <property type="match status" value="1"/>
</dbReference>
<dbReference type="NCBIfam" id="TIGR03455">
    <property type="entry name" value="HisG_C-term"/>
    <property type="match status" value="1"/>
</dbReference>
<dbReference type="PANTHER" id="PTHR21403:SF8">
    <property type="entry name" value="ATP PHOSPHORIBOSYLTRANSFERASE"/>
    <property type="match status" value="1"/>
</dbReference>
<dbReference type="PANTHER" id="PTHR21403">
    <property type="entry name" value="ATP PHOSPHORIBOSYLTRANSFERASE ATP-PRTASE"/>
    <property type="match status" value="1"/>
</dbReference>
<dbReference type="Pfam" id="PF01634">
    <property type="entry name" value="HisG"/>
    <property type="match status" value="1"/>
</dbReference>
<dbReference type="Pfam" id="PF08029">
    <property type="entry name" value="HisG_C"/>
    <property type="match status" value="1"/>
</dbReference>
<dbReference type="SUPFAM" id="SSF54913">
    <property type="entry name" value="GlnB-like"/>
    <property type="match status" value="1"/>
</dbReference>
<dbReference type="SUPFAM" id="SSF53850">
    <property type="entry name" value="Periplasmic binding protein-like II"/>
    <property type="match status" value="1"/>
</dbReference>
<dbReference type="PROSITE" id="PS01316">
    <property type="entry name" value="ATP_P_PHORIBOSYLTR"/>
    <property type="match status" value="1"/>
</dbReference>
<keyword id="KW-0028">Amino-acid biosynthesis</keyword>
<keyword id="KW-0067">ATP-binding</keyword>
<keyword id="KW-0963">Cytoplasm</keyword>
<keyword id="KW-0328">Glycosyltransferase</keyword>
<keyword id="KW-0368">Histidine biosynthesis</keyword>
<keyword id="KW-0460">Magnesium</keyword>
<keyword id="KW-0479">Metal-binding</keyword>
<keyword id="KW-0547">Nucleotide-binding</keyword>
<keyword id="KW-0808">Transferase</keyword>